<comment type="subcellular location">
    <subcellularLocation>
        <location evidence="2">Membrane</location>
        <topology evidence="2">Multi-pass membrane protein</topology>
    </subcellularLocation>
</comment>
<organism>
    <name type="scientific">Schizosaccharomyces pombe (strain 972 / ATCC 24843)</name>
    <name type="common">Fission yeast</name>
    <dbReference type="NCBI Taxonomy" id="284812"/>
    <lineage>
        <taxon>Eukaryota</taxon>
        <taxon>Fungi</taxon>
        <taxon>Dikarya</taxon>
        <taxon>Ascomycota</taxon>
        <taxon>Taphrinomycotina</taxon>
        <taxon>Schizosaccharomycetes</taxon>
        <taxon>Schizosaccharomycetales</taxon>
        <taxon>Schizosaccharomycetaceae</taxon>
        <taxon>Schizosaccharomyces</taxon>
    </lineage>
</organism>
<keyword id="KW-0472">Membrane</keyword>
<keyword id="KW-1185">Reference proteome</keyword>
<keyword id="KW-0812">Transmembrane</keyword>
<keyword id="KW-1133">Transmembrane helix</keyword>
<name>YB7K_SCHPO</name>
<reference key="1">
    <citation type="journal article" date="2002" name="Nature">
        <title>The genome sequence of Schizosaccharomyces pombe.</title>
        <authorList>
            <person name="Wood V."/>
            <person name="Gwilliam R."/>
            <person name="Rajandream M.A."/>
            <person name="Lyne M.H."/>
            <person name="Lyne R."/>
            <person name="Stewart A."/>
            <person name="Sgouros J.G."/>
            <person name="Peat N."/>
            <person name="Hayles J."/>
            <person name="Baker S.G."/>
            <person name="Basham D."/>
            <person name="Bowman S."/>
            <person name="Brooks K."/>
            <person name="Brown D."/>
            <person name="Brown S."/>
            <person name="Chillingworth T."/>
            <person name="Churcher C.M."/>
            <person name="Collins M."/>
            <person name="Connor R."/>
            <person name="Cronin A."/>
            <person name="Davis P."/>
            <person name="Feltwell T."/>
            <person name="Fraser A."/>
            <person name="Gentles S."/>
            <person name="Goble A."/>
            <person name="Hamlin N."/>
            <person name="Harris D.E."/>
            <person name="Hidalgo J."/>
            <person name="Hodgson G."/>
            <person name="Holroyd S."/>
            <person name="Hornsby T."/>
            <person name="Howarth S."/>
            <person name="Huckle E.J."/>
            <person name="Hunt S."/>
            <person name="Jagels K."/>
            <person name="James K.D."/>
            <person name="Jones L."/>
            <person name="Jones M."/>
            <person name="Leather S."/>
            <person name="McDonald S."/>
            <person name="McLean J."/>
            <person name="Mooney P."/>
            <person name="Moule S."/>
            <person name="Mungall K.L."/>
            <person name="Murphy L.D."/>
            <person name="Niblett D."/>
            <person name="Odell C."/>
            <person name="Oliver K."/>
            <person name="O'Neil S."/>
            <person name="Pearson D."/>
            <person name="Quail M.A."/>
            <person name="Rabbinowitsch E."/>
            <person name="Rutherford K.M."/>
            <person name="Rutter S."/>
            <person name="Saunders D."/>
            <person name="Seeger K."/>
            <person name="Sharp S."/>
            <person name="Skelton J."/>
            <person name="Simmonds M.N."/>
            <person name="Squares R."/>
            <person name="Squares S."/>
            <person name="Stevens K."/>
            <person name="Taylor K."/>
            <person name="Taylor R.G."/>
            <person name="Tivey A."/>
            <person name="Walsh S.V."/>
            <person name="Warren T."/>
            <person name="Whitehead S."/>
            <person name="Woodward J.R."/>
            <person name="Volckaert G."/>
            <person name="Aert R."/>
            <person name="Robben J."/>
            <person name="Grymonprez B."/>
            <person name="Weltjens I."/>
            <person name="Vanstreels E."/>
            <person name="Rieger M."/>
            <person name="Schaefer M."/>
            <person name="Mueller-Auer S."/>
            <person name="Gabel C."/>
            <person name="Fuchs M."/>
            <person name="Duesterhoeft A."/>
            <person name="Fritzc C."/>
            <person name="Holzer E."/>
            <person name="Moestl D."/>
            <person name="Hilbert H."/>
            <person name="Borzym K."/>
            <person name="Langer I."/>
            <person name="Beck A."/>
            <person name="Lehrach H."/>
            <person name="Reinhardt R."/>
            <person name="Pohl T.M."/>
            <person name="Eger P."/>
            <person name="Zimmermann W."/>
            <person name="Wedler H."/>
            <person name="Wambutt R."/>
            <person name="Purnelle B."/>
            <person name="Goffeau A."/>
            <person name="Cadieu E."/>
            <person name="Dreano S."/>
            <person name="Gloux S."/>
            <person name="Lelaure V."/>
            <person name="Mottier S."/>
            <person name="Galibert F."/>
            <person name="Aves S.J."/>
            <person name="Xiang Z."/>
            <person name="Hunt C."/>
            <person name="Moore K."/>
            <person name="Hurst S.M."/>
            <person name="Lucas M."/>
            <person name="Rochet M."/>
            <person name="Gaillardin C."/>
            <person name="Tallada V.A."/>
            <person name="Garzon A."/>
            <person name="Thode G."/>
            <person name="Daga R.R."/>
            <person name="Cruzado L."/>
            <person name="Jimenez J."/>
            <person name="Sanchez M."/>
            <person name="del Rey F."/>
            <person name="Benito J."/>
            <person name="Dominguez A."/>
            <person name="Revuelta J.L."/>
            <person name="Moreno S."/>
            <person name="Armstrong J."/>
            <person name="Forsburg S.L."/>
            <person name="Cerutti L."/>
            <person name="Lowe T."/>
            <person name="McCombie W.R."/>
            <person name="Paulsen I."/>
            <person name="Potashkin J."/>
            <person name="Shpakovski G.V."/>
            <person name="Ussery D."/>
            <person name="Barrell B.G."/>
            <person name="Nurse P."/>
        </authorList>
    </citation>
    <scope>NUCLEOTIDE SEQUENCE [LARGE SCALE GENOMIC DNA]</scope>
    <source>
        <strain>972 / ATCC 24843</strain>
    </source>
</reference>
<reference key="2">
    <citation type="journal article" date="2011" name="Science">
        <title>Comparative functional genomics of the fission yeasts.</title>
        <authorList>
            <person name="Rhind N."/>
            <person name="Chen Z."/>
            <person name="Yassour M."/>
            <person name="Thompson D.A."/>
            <person name="Haas B.J."/>
            <person name="Habib N."/>
            <person name="Wapinski I."/>
            <person name="Roy S."/>
            <person name="Lin M.F."/>
            <person name="Heiman D.I."/>
            <person name="Young S.K."/>
            <person name="Furuya K."/>
            <person name="Guo Y."/>
            <person name="Pidoux A."/>
            <person name="Chen H.M."/>
            <person name="Robbertse B."/>
            <person name="Goldberg J.M."/>
            <person name="Aoki K."/>
            <person name="Bayne E.H."/>
            <person name="Berlin A.M."/>
            <person name="Desjardins C.A."/>
            <person name="Dobbs E."/>
            <person name="Dukaj L."/>
            <person name="Fan L."/>
            <person name="FitzGerald M.G."/>
            <person name="French C."/>
            <person name="Gujja S."/>
            <person name="Hansen K."/>
            <person name="Keifenheim D."/>
            <person name="Levin J.Z."/>
            <person name="Mosher R.A."/>
            <person name="Mueller C.A."/>
            <person name="Pfiffner J."/>
            <person name="Priest M."/>
            <person name="Russ C."/>
            <person name="Smialowska A."/>
            <person name="Swoboda P."/>
            <person name="Sykes S.M."/>
            <person name="Vaughn M."/>
            <person name="Vengrova S."/>
            <person name="Yoder R."/>
            <person name="Zeng Q."/>
            <person name="Allshire R."/>
            <person name="Baulcombe D."/>
            <person name="Birren B.W."/>
            <person name="Brown W."/>
            <person name="Ekwall K."/>
            <person name="Kellis M."/>
            <person name="Leatherwood J."/>
            <person name="Levin H."/>
            <person name="Margalit H."/>
            <person name="Martienssen R."/>
            <person name="Nieduszynski C.A."/>
            <person name="Spatafora J.W."/>
            <person name="Friedman N."/>
            <person name="Dalgaard J.Z."/>
            <person name="Baumann P."/>
            <person name="Niki H."/>
            <person name="Regev A."/>
            <person name="Nusbaum C."/>
        </authorList>
    </citation>
    <scope>IDENTIFICATION</scope>
</reference>
<proteinExistence type="predicted"/>
<feature type="chain" id="PRO_0000416619" description="Putative uncharacterized transmembrane protein C16E9.20">
    <location>
        <begin position="1"/>
        <end position="189"/>
    </location>
</feature>
<feature type="transmembrane region" description="Helical" evidence="1">
    <location>
        <begin position="2"/>
        <end position="22"/>
    </location>
</feature>
<feature type="transmembrane region" description="Helical" evidence="1">
    <location>
        <begin position="93"/>
        <end position="113"/>
    </location>
</feature>
<feature type="transmembrane region" description="Helical" evidence="1">
    <location>
        <begin position="116"/>
        <end position="136"/>
    </location>
</feature>
<evidence type="ECO:0000255" key="1"/>
<evidence type="ECO:0000305" key="2"/>
<dbReference type="EMBL" id="CU329671">
    <property type="protein sequence ID" value="CCD31366.1"/>
    <property type="molecule type" value="Genomic_DNA"/>
</dbReference>
<dbReference type="RefSeq" id="XP_004001713.1">
    <property type="nucleotide sequence ID" value="XM_004001664.1"/>
</dbReference>
<dbReference type="SMR" id="G2TRQ3"/>
<dbReference type="PaxDb" id="4896-SPBC16E9.20.1"/>
<dbReference type="EnsemblFungi" id="SPBC16E9.20.1">
    <property type="protein sequence ID" value="SPBC16E9.20.1:pep"/>
    <property type="gene ID" value="SPBC16E9.20"/>
</dbReference>
<dbReference type="PomBase" id="SPBC16E9.20"/>
<dbReference type="VEuPathDB" id="FungiDB:SPBC16E9.20"/>
<dbReference type="HOGENOM" id="CLU_1435205_0_0_1"/>
<dbReference type="InParanoid" id="G2TRQ3"/>
<dbReference type="PRO" id="PR:G2TRQ3"/>
<dbReference type="Proteomes" id="UP000002485">
    <property type="component" value="Chromosome II"/>
</dbReference>
<dbReference type="GO" id="GO:0016020">
    <property type="term" value="C:membrane"/>
    <property type="evidence" value="ECO:0007669"/>
    <property type="project" value="UniProtKB-SubCell"/>
</dbReference>
<sequence length="189" mass="21859">MLVVVSLTPPVGVCVGLFHHLLSLGGGITTCITSMETGITKWSGSLRCNSQMQKEKGERKGKEEERKRGKEEKIWFHSKKMKIHDYCIVLYCILFYFYFVLILFYFIALYFILHPFYSTILFFFPLFIKCSHLHTLTSFYSLLSSLFSSLIPKHSLHLAPLRKLNLSHFVSPLCAMFPHVGLRLLQTTQ</sequence>
<protein>
    <recommendedName>
        <fullName>Putative uncharacterized transmembrane protein C16E9.20</fullName>
    </recommendedName>
</protein>
<accession>G2TRQ3</accession>
<gene>
    <name type="ORF">SPBC16E9.20</name>
</gene>